<evidence type="ECO:0000255" key="1">
    <source>
        <dbReference type="HAMAP-Rule" id="MF_00076"/>
    </source>
</evidence>
<dbReference type="EC" id="4.2.1.19" evidence="1"/>
<dbReference type="EMBL" id="CP000485">
    <property type="protein sequence ID" value="ABK84612.1"/>
    <property type="molecule type" value="Genomic_DNA"/>
</dbReference>
<dbReference type="RefSeq" id="WP_001209297.1">
    <property type="nucleotide sequence ID" value="NC_008600.1"/>
</dbReference>
<dbReference type="SMR" id="A0RBL9"/>
<dbReference type="KEGG" id="btl:BALH_1262"/>
<dbReference type="HOGENOM" id="CLU_044308_3_0_9"/>
<dbReference type="UniPathway" id="UPA00031">
    <property type="reaction ID" value="UER00011"/>
</dbReference>
<dbReference type="GO" id="GO:0005737">
    <property type="term" value="C:cytoplasm"/>
    <property type="evidence" value="ECO:0007669"/>
    <property type="project" value="UniProtKB-SubCell"/>
</dbReference>
<dbReference type="GO" id="GO:0004424">
    <property type="term" value="F:imidazoleglycerol-phosphate dehydratase activity"/>
    <property type="evidence" value="ECO:0007669"/>
    <property type="project" value="UniProtKB-UniRule"/>
</dbReference>
<dbReference type="GO" id="GO:0000105">
    <property type="term" value="P:L-histidine biosynthetic process"/>
    <property type="evidence" value="ECO:0007669"/>
    <property type="project" value="UniProtKB-UniRule"/>
</dbReference>
<dbReference type="CDD" id="cd07914">
    <property type="entry name" value="IGPD"/>
    <property type="match status" value="1"/>
</dbReference>
<dbReference type="FunFam" id="3.30.230.40:FF:000001">
    <property type="entry name" value="Imidazoleglycerol-phosphate dehydratase HisB"/>
    <property type="match status" value="1"/>
</dbReference>
<dbReference type="FunFam" id="3.30.230.40:FF:000003">
    <property type="entry name" value="Imidazoleglycerol-phosphate dehydratase HisB"/>
    <property type="match status" value="1"/>
</dbReference>
<dbReference type="Gene3D" id="3.30.230.40">
    <property type="entry name" value="Imidazole glycerol phosphate dehydratase, domain 1"/>
    <property type="match status" value="2"/>
</dbReference>
<dbReference type="HAMAP" id="MF_00076">
    <property type="entry name" value="HisB"/>
    <property type="match status" value="1"/>
</dbReference>
<dbReference type="InterPro" id="IPR038494">
    <property type="entry name" value="IGPD_sf"/>
</dbReference>
<dbReference type="InterPro" id="IPR000807">
    <property type="entry name" value="ImidazoleglycerolP_deHydtase"/>
</dbReference>
<dbReference type="InterPro" id="IPR020565">
    <property type="entry name" value="ImidazoleglycerP_deHydtase_CS"/>
</dbReference>
<dbReference type="InterPro" id="IPR020568">
    <property type="entry name" value="Ribosomal_Su5_D2-typ_SF"/>
</dbReference>
<dbReference type="NCBIfam" id="NF002107">
    <property type="entry name" value="PRK00951.1-2"/>
    <property type="match status" value="1"/>
</dbReference>
<dbReference type="NCBIfam" id="NF002111">
    <property type="entry name" value="PRK00951.2-1"/>
    <property type="match status" value="1"/>
</dbReference>
<dbReference type="NCBIfam" id="NF002114">
    <property type="entry name" value="PRK00951.2-4"/>
    <property type="match status" value="1"/>
</dbReference>
<dbReference type="PANTHER" id="PTHR23133:SF2">
    <property type="entry name" value="IMIDAZOLEGLYCEROL-PHOSPHATE DEHYDRATASE"/>
    <property type="match status" value="1"/>
</dbReference>
<dbReference type="PANTHER" id="PTHR23133">
    <property type="entry name" value="IMIDAZOLEGLYCEROL-PHOSPHATE DEHYDRATASE HIS7"/>
    <property type="match status" value="1"/>
</dbReference>
<dbReference type="Pfam" id="PF00475">
    <property type="entry name" value="IGPD"/>
    <property type="match status" value="1"/>
</dbReference>
<dbReference type="SUPFAM" id="SSF54211">
    <property type="entry name" value="Ribosomal protein S5 domain 2-like"/>
    <property type="match status" value="2"/>
</dbReference>
<dbReference type="PROSITE" id="PS00954">
    <property type="entry name" value="IGP_DEHYDRATASE_1"/>
    <property type="match status" value="1"/>
</dbReference>
<dbReference type="PROSITE" id="PS00955">
    <property type="entry name" value="IGP_DEHYDRATASE_2"/>
    <property type="match status" value="1"/>
</dbReference>
<sequence length="194" mass="21539">MRESSQIRETTETKIKLSLQLDEGKNVSVQTGVGFFDHMLTLFARHGRFGLQVEAEGDVFVDAHHTVEDVGIVLGNCLKEALQNKEGINRYGSAYVPMDESLGFVAIDISGRSYIVFQGELTNPKLGDFDTELTEEFFRAVAHTANITLHARILYGSNTHHKIEALFKAFGRALREAVERNAHITGVNSTKGML</sequence>
<protein>
    <recommendedName>
        <fullName evidence="1">Imidazoleglycerol-phosphate dehydratase</fullName>
        <shortName evidence="1">IGPD</shortName>
        <ecNumber evidence="1">4.2.1.19</ecNumber>
    </recommendedName>
</protein>
<gene>
    <name evidence="1" type="primary">hisB</name>
    <name type="ordered locus">BALH_1262</name>
</gene>
<feature type="chain" id="PRO_1000010244" description="Imidazoleglycerol-phosphate dehydratase">
    <location>
        <begin position="1"/>
        <end position="194"/>
    </location>
</feature>
<proteinExistence type="inferred from homology"/>
<reference key="1">
    <citation type="journal article" date="2007" name="J. Bacteriol.">
        <title>The complete genome sequence of Bacillus thuringiensis Al Hakam.</title>
        <authorList>
            <person name="Challacombe J.F."/>
            <person name="Altherr M.R."/>
            <person name="Xie G."/>
            <person name="Bhotika S.S."/>
            <person name="Brown N."/>
            <person name="Bruce D."/>
            <person name="Campbell C.S."/>
            <person name="Campbell M.L."/>
            <person name="Chen J."/>
            <person name="Chertkov O."/>
            <person name="Cleland C."/>
            <person name="Dimitrijevic M."/>
            <person name="Doggett N.A."/>
            <person name="Fawcett J.J."/>
            <person name="Glavina T."/>
            <person name="Goodwin L.A."/>
            <person name="Green L.D."/>
            <person name="Han C.S."/>
            <person name="Hill K.K."/>
            <person name="Hitchcock P."/>
            <person name="Jackson P.J."/>
            <person name="Keim P."/>
            <person name="Kewalramani A.R."/>
            <person name="Longmire J."/>
            <person name="Lucas S."/>
            <person name="Malfatti S."/>
            <person name="Martinez D."/>
            <person name="McMurry K."/>
            <person name="Meincke L.J."/>
            <person name="Misra M."/>
            <person name="Moseman B.L."/>
            <person name="Mundt M."/>
            <person name="Munk A.C."/>
            <person name="Okinaka R.T."/>
            <person name="Parson-Quintana B."/>
            <person name="Reilly L.P."/>
            <person name="Richardson P."/>
            <person name="Robinson D.L."/>
            <person name="Saunders E."/>
            <person name="Tapia R."/>
            <person name="Tesmer J.G."/>
            <person name="Thayer N."/>
            <person name="Thompson L.S."/>
            <person name="Tice H."/>
            <person name="Ticknor L.O."/>
            <person name="Wills P.L."/>
            <person name="Gilna P."/>
            <person name="Brettin T.S."/>
        </authorList>
    </citation>
    <scope>NUCLEOTIDE SEQUENCE [LARGE SCALE GENOMIC DNA]</scope>
    <source>
        <strain>Al Hakam</strain>
    </source>
</reference>
<keyword id="KW-0028">Amino-acid biosynthesis</keyword>
<keyword id="KW-0963">Cytoplasm</keyword>
<keyword id="KW-0368">Histidine biosynthesis</keyword>
<keyword id="KW-0456">Lyase</keyword>
<name>HIS7_BACAH</name>
<comment type="catalytic activity">
    <reaction evidence="1">
        <text>D-erythro-1-(imidazol-4-yl)glycerol 3-phosphate = 3-(imidazol-4-yl)-2-oxopropyl phosphate + H2O</text>
        <dbReference type="Rhea" id="RHEA:11040"/>
        <dbReference type="ChEBI" id="CHEBI:15377"/>
        <dbReference type="ChEBI" id="CHEBI:57766"/>
        <dbReference type="ChEBI" id="CHEBI:58278"/>
        <dbReference type="EC" id="4.2.1.19"/>
    </reaction>
</comment>
<comment type="pathway">
    <text evidence="1">Amino-acid biosynthesis; L-histidine biosynthesis; L-histidine from 5-phospho-alpha-D-ribose 1-diphosphate: step 6/9.</text>
</comment>
<comment type="subcellular location">
    <subcellularLocation>
        <location evidence="1">Cytoplasm</location>
    </subcellularLocation>
</comment>
<comment type="similarity">
    <text evidence="1">Belongs to the imidazoleglycerol-phosphate dehydratase family.</text>
</comment>
<accession>A0RBL9</accession>
<organism>
    <name type="scientific">Bacillus thuringiensis (strain Al Hakam)</name>
    <dbReference type="NCBI Taxonomy" id="412694"/>
    <lineage>
        <taxon>Bacteria</taxon>
        <taxon>Bacillati</taxon>
        <taxon>Bacillota</taxon>
        <taxon>Bacilli</taxon>
        <taxon>Bacillales</taxon>
        <taxon>Bacillaceae</taxon>
        <taxon>Bacillus</taxon>
        <taxon>Bacillus cereus group</taxon>
    </lineage>
</organism>